<dbReference type="EC" id="3.4.21.89" evidence="1"/>
<dbReference type="EMBL" id="CU928167">
    <property type="protein sequence ID" value="CAR21832.1"/>
    <property type="molecule type" value="Genomic_DNA"/>
</dbReference>
<dbReference type="RefSeq" id="XP_002552270.1">
    <property type="nucleotide sequence ID" value="XM_002552224.1"/>
</dbReference>
<dbReference type="SMR" id="C5DDH1"/>
<dbReference type="FunCoup" id="C5DDH1">
    <property type="interactions" value="699"/>
</dbReference>
<dbReference type="STRING" id="559295.C5DDH1"/>
<dbReference type="MEROPS" id="S26.010"/>
<dbReference type="GeneID" id="8291128"/>
<dbReference type="KEGG" id="lth:KLTH0C00946g"/>
<dbReference type="eggNOG" id="KOG3342">
    <property type="taxonomic scope" value="Eukaryota"/>
</dbReference>
<dbReference type="HOGENOM" id="CLU_089996_0_0_1"/>
<dbReference type="InParanoid" id="C5DDH1"/>
<dbReference type="OMA" id="ILMNEYP"/>
<dbReference type="OrthoDB" id="10257561at2759"/>
<dbReference type="Proteomes" id="UP000002036">
    <property type="component" value="Chromosome C"/>
</dbReference>
<dbReference type="GO" id="GO:0005787">
    <property type="term" value="C:signal peptidase complex"/>
    <property type="evidence" value="ECO:0007669"/>
    <property type="project" value="TreeGrafter"/>
</dbReference>
<dbReference type="GO" id="GO:0004252">
    <property type="term" value="F:serine-type endopeptidase activity"/>
    <property type="evidence" value="ECO:0007669"/>
    <property type="project" value="UniProtKB-EC"/>
</dbReference>
<dbReference type="GO" id="GO:0006465">
    <property type="term" value="P:signal peptide processing"/>
    <property type="evidence" value="ECO:0007669"/>
    <property type="project" value="InterPro"/>
</dbReference>
<dbReference type="CDD" id="cd06462">
    <property type="entry name" value="Peptidase_S24_S26"/>
    <property type="match status" value="1"/>
</dbReference>
<dbReference type="InterPro" id="IPR036286">
    <property type="entry name" value="LexA/Signal_pep-like_sf"/>
</dbReference>
<dbReference type="InterPro" id="IPR019756">
    <property type="entry name" value="Pept_S26A_signal_pept_1_Ser-AS"/>
</dbReference>
<dbReference type="InterPro" id="IPR001733">
    <property type="entry name" value="Peptidase_S26B"/>
</dbReference>
<dbReference type="NCBIfam" id="TIGR02228">
    <property type="entry name" value="sigpep_I_arch"/>
    <property type="match status" value="1"/>
</dbReference>
<dbReference type="PANTHER" id="PTHR10806">
    <property type="entry name" value="SIGNAL PEPTIDASE COMPLEX CATALYTIC SUBUNIT SEC11"/>
    <property type="match status" value="1"/>
</dbReference>
<dbReference type="PANTHER" id="PTHR10806:SF6">
    <property type="entry name" value="SIGNAL PEPTIDASE COMPLEX CATALYTIC SUBUNIT SEC11"/>
    <property type="match status" value="1"/>
</dbReference>
<dbReference type="PRINTS" id="PR00728">
    <property type="entry name" value="SIGNALPTASE"/>
</dbReference>
<dbReference type="SUPFAM" id="SSF51306">
    <property type="entry name" value="LexA/Signal peptidase"/>
    <property type="match status" value="1"/>
</dbReference>
<dbReference type="PROSITE" id="PS00501">
    <property type="entry name" value="SPASE_I_1"/>
    <property type="match status" value="1"/>
</dbReference>
<keyword id="KW-0256">Endoplasmic reticulum</keyword>
<keyword id="KW-0378">Hydrolase</keyword>
<keyword id="KW-0472">Membrane</keyword>
<keyword id="KW-0645">Protease</keyword>
<keyword id="KW-1185">Reference proteome</keyword>
<keyword id="KW-0735">Signal-anchor</keyword>
<keyword id="KW-0812">Transmembrane</keyword>
<keyword id="KW-1133">Transmembrane helix</keyword>
<proteinExistence type="inferred from homology"/>
<organism>
    <name type="scientific">Lachancea thermotolerans (strain ATCC 56472 / CBS 6340 / NRRL Y-8284)</name>
    <name type="common">Yeast</name>
    <name type="synonym">Kluyveromyces thermotolerans</name>
    <dbReference type="NCBI Taxonomy" id="559295"/>
    <lineage>
        <taxon>Eukaryota</taxon>
        <taxon>Fungi</taxon>
        <taxon>Dikarya</taxon>
        <taxon>Ascomycota</taxon>
        <taxon>Saccharomycotina</taxon>
        <taxon>Saccharomycetes</taxon>
        <taxon>Saccharomycetales</taxon>
        <taxon>Saccharomycetaceae</taxon>
        <taxon>Lachancea</taxon>
    </lineage>
</organism>
<protein>
    <recommendedName>
        <fullName>Signal peptidase complex catalytic subunit SEC11</fullName>
        <ecNumber evidence="1">3.4.21.89</ecNumber>
    </recommendedName>
    <alternativeName>
        <fullName>Signal peptidase I</fullName>
    </alternativeName>
</protein>
<gene>
    <name type="primary">SEC11</name>
    <name type="ordered locus">KLTH0C00946g</name>
</gene>
<evidence type="ECO:0000250" key="1">
    <source>
        <dbReference type="UniProtKB" id="P15367"/>
    </source>
</evidence>
<evidence type="ECO:0000250" key="2">
    <source>
        <dbReference type="UniProtKB" id="P67812"/>
    </source>
</evidence>
<evidence type="ECO:0000255" key="3"/>
<evidence type="ECO:0000305" key="4"/>
<accession>C5DDH1</accession>
<reference key="1">
    <citation type="journal article" date="2009" name="Genome Res.">
        <title>Comparative genomics of protoploid Saccharomycetaceae.</title>
        <authorList>
            <consortium name="The Genolevures Consortium"/>
            <person name="Souciet J.-L."/>
            <person name="Dujon B."/>
            <person name="Gaillardin C."/>
            <person name="Johnston M."/>
            <person name="Baret P.V."/>
            <person name="Cliften P."/>
            <person name="Sherman D.J."/>
            <person name="Weissenbach J."/>
            <person name="Westhof E."/>
            <person name="Wincker P."/>
            <person name="Jubin C."/>
            <person name="Poulain J."/>
            <person name="Barbe V."/>
            <person name="Segurens B."/>
            <person name="Artiguenave F."/>
            <person name="Anthouard V."/>
            <person name="Vacherie B."/>
            <person name="Val M.-E."/>
            <person name="Fulton R.S."/>
            <person name="Minx P."/>
            <person name="Wilson R."/>
            <person name="Durrens P."/>
            <person name="Jean G."/>
            <person name="Marck C."/>
            <person name="Martin T."/>
            <person name="Nikolski M."/>
            <person name="Rolland T."/>
            <person name="Seret M.-L."/>
            <person name="Casaregola S."/>
            <person name="Despons L."/>
            <person name="Fairhead C."/>
            <person name="Fischer G."/>
            <person name="Lafontaine I."/>
            <person name="Leh V."/>
            <person name="Lemaire M."/>
            <person name="de Montigny J."/>
            <person name="Neuveglise C."/>
            <person name="Thierry A."/>
            <person name="Blanc-Lenfle I."/>
            <person name="Bleykasten C."/>
            <person name="Diffels J."/>
            <person name="Fritsch E."/>
            <person name="Frangeul L."/>
            <person name="Goeffon A."/>
            <person name="Jauniaux N."/>
            <person name="Kachouri-Lafond R."/>
            <person name="Payen C."/>
            <person name="Potier S."/>
            <person name="Pribylova L."/>
            <person name="Ozanne C."/>
            <person name="Richard G.-F."/>
            <person name="Sacerdot C."/>
            <person name="Straub M.-L."/>
            <person name="Talla E."/>
        </authorList>
    </citation>
    <scope>NUCLEOTIDE SEQUENCE [LARGE SCALE GENOMIC DNA]</scope>
    <source>
        <strain>ATCC 56472 / CBS 6340 / NRRL Y-8284</strain>
    </source>
</reference>
<feature type="chain" id="PRO_0000412333" description="Signal peptidase complex catalytic subunit SEC11">
    <location>
        <begin position="1"/>
        <end position="168"/>
    </location>
</feature>
<feature type="topological domain" description="Cytoplasmic" evidence="3">
    <location>
        <begin position="1"/>
        <end position="12"/>
    </location>
</feature>
<feature type="transmembrane region" description="Helical; Signal-anchor for type II membrane protein" evidence="3">
    <location>
        <begin position="13"/>
        <end position="30"/>
    </location>
</feature>
<feature type="topological domain" description="Lumenal" evidence="3">
    <location>
        <begin position="31"/>
        <end position="168"/>
    </location>
</feature>
<feature type="region of interest" description="C-terminal short (CTS) helix" evidence="2">
    <location>
        <begin position="154"/>
        <end position="165"/>
    </location>
</feature>
<feature type="active site" description="Charge relay system" evidence="1">
    <location>
        <position position="44"/>
    </location>
</feature>
<feature type="active site" description="Charge relay system" evidence="1">
    <location>
        <position position="83"/>
    </location>
</feature>
<feature type="active site" description="Charge relay system" evidence="1">
    <location>
        <position position="110"/>
    </location>
</feature>
<comment type="function">
    <text evidence="1 2">Catalytic component of the signal peptidase complex (SPC) which catalyzes the cleavage of N-terminal signal sequences from nascent proteins as they are translocated into the lumen of the endoplasmic reticulum (By similarity). Specifically cleaves N-terminal signal peptides that contain a hydrophobic alpha-helix (h-region) shorter than 18-20 amino acids (By similarity).</text>
</comment>
<comment type="catalytic activity">
    <reaction evidence="1">
        <text>Cleavage of hydrophobic, N-terminal signal or leader sequences from secreted and periplasmic proteins.</text>
        <dbReference type="EC" id="3.4.21.89"/>
    </reaction>
</comment>
<comment type="subunit">
    <text evidence="1 2">Component of the signal peptidase complex (SPC) composed of a catalytic subunit SEC11 and three accessory subunits SPC1, SPC2 and SPC3 (By similarity). The complex induces a local thinning of the ER membrane which is used to measure the length of the signal peptide (SP) h-region of protein substrates. This ensures the selectivity of the complex towards h-regions shorter than 18-20 amino acids (By similarity). SPC associates with the translocon complex (By similarity).</text>
</comment>
<comment type="subcellular location">
    <subcellularLocation>
        <location evidence="1">Endoplasmic reticulum membrane</location>
        <topology evidence="1">Single-pass type II membrane protein</topology>
    </subcellularLocation>
</comment>
<comment type="domain">
    <text evidence="2">The C-terminal short (CTS) helix is essential for catalytic activity. It may be accommodated as a transmembrane helix in the thinned membrane environment of the complex, similarly to the signal peptide in the complex substrates.</text>
</comment>
<comment type="similarity">
    <text evidence="4">Belongs to the peptidase S26B family.</text>
</comment>
<sequence length="168" mass="18977">MNLRLELTRFLNLCFALASAFMFWKGLSIVTNSHSPIVVVLSGSMEPAFQRGDILFLWNRNELNKVGDVVVYEVDNKEIPIVHRVLREHVDETSGKQLLLTKGDNNAGNDIPLYAKRKIYLHKEKDIVGTVKGYIPQLGYITIWISENKYAKMGLMGLIALSALLSNE</sequence>
<name>SEC11_LACTC</name>